<accession>F4HXU3</accession>
<accession>F4HXU1</accession>
<accession>F4HXU2</accession>
<accession>Q9LQV5</accession>
<keyword id="KW-0025">Alternative splicing</keyword>
<keyword id="KW-0175">Coiled coil</keyword>
<keyword id="KW-0963">Cytoplasm</keyword>
<keyword id="KW-0539">Nucleus</keyword>
<keyword id="KW-1185">Reference proteome</keyword>
<keyword id="KW-0804">Transcription</keyword>
<keyword id="KW-0805">Transcription regulation</keyword>
<organism evidence="8">
    <name type="scientific">Arabidopsis thaliana</name>
    <name type="common">Mouse-ear cress</name>
    <dbReference type="NCBI Taxonomy" id="3702"/>
    <lineage>
        <taxon>Eukaryota</taxon>
        <taxon>Viridiplantae</taxon>
        <taxon>Streptophyta</taxon>
        <taxon>Embryophyta</taxon>
        <taxon>Tracheophyta</taxon>
        <taxon>Spermatophyta</taxon>
        <taxon>Magnoliopsida</taxon>
        <taxon>eudicotyledons</taxon>
        <taxon>Gunneridae</taxon>
        <taxon>Pentapetalae</taxon>
        <taxon>rosids</taxon>
        <taxon>malvids</taxon>
        <taxon>Brassicales</taxon>
        <taxon>Brassicaceae</taxon>
        <taxon>Camelineae</taxon>
        <taxon>Arabidopsis</taxon>
    </lineage>
</organism>
<gene>
    <name evidence="4" type="primary">KNATM</name>
    <name evidence="6" type="ordered locus">At1g14760</name>
    <name evidence="7" type="ORF">F10B6.16</name>
</gene>
<proteinExistence type="evidence at protein level"/>
<feature type="chain" id="PRO_0000434107" description="Protein KNATM">
    <location>
        <begin position="1"/>
        <end position="142"/>
    </location>
</feature>
<feature type="coiled-coil region" evidence="1">
    <location>
        <begin position="4"/>
        <end position="36"/>
    </location>
</feature>
<feature type="splice variant" id="VSP_057899" description="In isoform KNATM-C.">
    <original>VCSGDFDSPEIMNTADDLALSKLSLHPDSSSEATSSELDQF</original>
    <variation>EAYCSTLRELKEAMEKPLTETHRFVDAVYTQLNDIVMSSPP</variation>
    <location>
        <begin position="56"/>
        <end position="96"/>
    </location>
</feature>
<feature type="splice variant" id="VSP_057900" description="In isoform KNATM-C.">
    <location>
        <begin position="97"/>
        <end position="142"/>
    </location>
</feature>
<feature type="splice variant" id="VSP_057901" description="In isoform KNATM-B.">
    <original>VLFFFSPCQNIFTQQKTTFHVLLFFPLQINLTFKYSKFILPRKKQ</original>
    <variation>EAYCSTLRELKEAMEKPLTETHRFVDAVYTQLNDIVMSSPP</variation>
    <location>
        <begin position="98"/>
        <end position="142"/>
    </location>
</feature>
<comment type="function">
    <molecule>Isoform KNATM-B</molecule>
    <text evidence="2">Transcriptional regulator involved in leaf proximal/distal patterning. May act by sequestering BELL transcription factors.</text>
</comment>
<comment type="subunit">
    <molecule>Isoform KNATM-B</molecule>
    <text evidence="2">Interacts with KNAT1, KNAT3, KNAT4, BEL1, BLH2, BLH4 and BLH9, but not with BLH8 or the KNATM-A and KNATM-C isoforms. Isoforms KNATM-A and KNATM-C: no interactions with KNATM-B, KNOXX or BELL proteins.</text>
</comment>
<comment type="subcellular location">
    <molecule>Isoform KNATM-B</molecule>
    <subcellularLocation>
        <location evidence="2">Cytoplasm</location>
    </subcellularLocation>
    <subcellularLocation>
        <location evidence="2">Nucleus</location>
    </subcellularLocation>
</comment>
<comment type="alternative products">
    <event type="alternative splicing"/>
    <isoform>
        <id>F4HXU3-1</id>
        <name evidence="4">KNATM-A</name>
        <sequence type="displayed"/>
    </isoform>
    <isoform>
        <id>F4HXU3-2</id>
        <name evidence="4">KNATM-B</name>
        <sequence type="described" ref="VSP_057901"/>
    </isoform>
    <isoform>
        <id>F4HXU3-3</id>
        <name evidence="4">KNATM-C</name>
        <sequence type="described" ref="VSP_057899 VSP_057900"/>
    </isoform>
</comment>
<comment type="tissue specificity">
    <text evidence="2">Detected in inflorescences, seedlings, leaves, hydathodes, stems, roots, embryo and siliques. Expressed in a polar pattern in organ primordia and at the boundary of mature organs. Detected in the lateral domains of flower meristems, but not in the inflorescence meristem or the vegetative shoot apical meristem.</text>
</comment>
<comment type="induction">
    <text evidence="3">Down-regulated by the AS1 repressor complex including HDA6.</text>
</comment>
<comment type="domain">
    <molecule>Isoform KNATM-B</molecule>
    <text evidence="2">The MEINOX domain (33-138) is sufficient for interactions with BELL proteins (PubMed:18398054). The BP-interacting domain (BPID, 1-32) is necessary for interactions with KNOX proteins (PubMed:18398054).</text>
</comment>
<comment type="sequence caution" evidence="5">
    <conflict type="erroneous gene model prediction">
        <sequence resource="EMBL-CDS" id="AAF79243"/>
    </conflict>
</comment>
<dbReference type="EMBL" id="AC006917">
    <property type="protein sequence ID" value="AAF79243.1"/>
    <property type="status" value="ALT_SEQ"/>
    <property type="molecule type" value="Genomic_DNA"/>
</dbReference>
<dbReference type="EMBL" id="CP002684">
    <property type="protein sequence ID" value="AEE29220.1"/>
    <property type="molecule type" value="Genomic_DNA"/>
</dbReference>
<dbReference type="EMBL" id="CP002684">
    <property type="protein sequence ID" value="AEE29221.1"/>
    <property type="molecule type" value="Genomic_DNA"/>
</dbReference>
<dbReference type="EMBL" id="CP002684">
    <property type="protein sequence ID" value="AEE29222.1"/>
    <property type="molecule type" value="Genomic_DNA"/>
</dbReference>
<dbReference type="PIR" id="G86281">
    <property type="entry name" value="G86281"/>
</dbReference>
<dbReference type="RefSeq" id="NP_001154340.1">
    <molecule id="F4HXU3-2"/>
    <property type="nucleotide sequence ID" value="NM_001160868.2"/>
</dbReference>
<dbReference type="RefSeq" id="NP_001154341.1">
    <molecule id="F4HXU3-3"/>
    <property type="nucleotide sequence ID" value="NM_001160869.1"/>
</dbReference>
<dbReference type="RefSeq" id="NP_172929.1">
    <molecule id="F4HXU3-1"/>
    <property type="nucleotide sequence ID" value="NM_101345.2"/>
</dbReference>
<dbReference type="SMR" id="F4HXU3"/>
<dbReference type="STRING" id="3702.F4HXU3"/>
<dbReference type="PaxDb" id="3702-AT1G14760.1"/>
<dbReference type="EnsemblPlants" id="AT1G14760.1">
    <molecule id="F4HXU3-1"/>
    <property type="protein sequence ID" value="AT1G14760.1"/>
    <property type="gene ID" value="AT1G14760"/>
</dbReference>
<dbReference type="EnsemblPlants" id="AT1G14760.2">
    <molecule id="F4HXU3-2"/>
    <property type="protein sequence ID" value="AT1G14760.2"/>
    <property type="gene ID" value="AT1G14760"/>
</dbReference>
<dbReference type="EnsemblPlants" id="AT1G14760.3">
    <molecule id="F4HXU3-3"/>
    <property type="protein sequence ID" value="AT1G14760.3"/>
    <property type="gene ID" value="AT1G14760"/>
</dbReference>
<dbReference type="GeneID" id="838041"/>
<dbReference type="Gramene" id="AT1G14760.1">
    <molecule id="F4HXU3-1"/>
    <property type="protein sequence ID" value="AT1G14760.1"/>
    <property type="gene ID" value="AT1G14760"/>
</dbReference>
<dbReference type="Gramene" id="AT1G14760.2">
    <molecule id="F4HXU3-2"/>
    <property type="protein sequence ID" value="AT1G14760.2"/>
    <property type="gene ID" value="AT1G14760"/>
</dbReference>
<dbReference type="Gramene" id="AT1G14760.3">
    <molecule id="F4HXU3-3"/>
    <property type="protein sequence ID" value="AT1G14760.3"/>
    <property type="gene ID" value="AT1G14760"/>
</dbReference>
<dbReference type="KEGG" id="ath:AT1G14760"/>
<dbReference type="Araport" id="AT1G14760"/>
<dbReference type="TAIR" id="AT1G14760">
    <property type="gene designation" value="KNATM"/>
</dbReference>
<dbReference type="eggNOG" id="ENOG502S8VX">
    <property type="taxonomic scope" value="Eukaryota"/>
</dbReference>
<dbReference type="HOGENOM" id="CLU_1818457_0_0_1"/>
<dbReference type="InParanoid" id="F4HXU3"/>
<dbReference type="OMA" id="ENHINCL"/>
<dbReference type="OrthoDB" id="1704693at2759"/>
<dbReference type="PRO" id="PR:F4HXU3"/>
<dbReference type="Proteomes" id="UP000006548">
    <property type="component" value="Chromosome 1"/>
</dbReference>
<dbReference type="ExpressionAtlas" id="F4HXU3">
    <property type="expression patterns" value="baseline and differential"/>
</dbReference>
<dbReference type="GO" id="GO:0005737">
    <property type="term" value="C:cytoplasm"/>
    <property type="evidence" value="ECO:0000314"/>
    <property type="project" value="TAIR"/>
</dbReference>
<dbReference type="GO" id="GO:0005634">
    <property type="term" value="C:nucleus"/>
    <property type="evidence" value="ECO:0000314"/>
    <property type="project" value="TAIR"/>
</dbReference>
<dbReference type="GO" id="GO:0003677">
    <property type="term" value="F:DNA binding"/>
    <property type="evidence" value="ECO:0007669"/>
    <property type="project" value="InterPro"/>
</dbReference>
<dbReference type="GO" id="GO:0010589">
    <property type="term" value="P:leaf proximal/distal pattern formation"/>
    <property type="evidence" value="ECO:0000315"/>
    <property type="project" value="TAIR"/>
</dbReference>
<dbReference type="GO" id="GO:0045893">
    <property type="term" value="P:positive regulation of DNA-templated transcription"/>
    <property type="evidence" value="ECO:0000314"/>
    <property type="project" value="TAIR"/>
</dbReference>
<dbReference type="InterPro" id="IPR005540">
    <property type="entry name" value="KNOX1"/>
</dbReference>
<dbReference type="InterPro" id="IPR053363">
    <property type="entry name" value="Leaf_patterning_domain"/>
</dbReference>
<dbReference type="PANTHER" id="PTHR48268">
    <property type="entry name" value="HOMEOBOX PROTEIN KNOTTED-1-LIKE 6 ISOFORM X1"/>
    <property type="match status" value="1"/>
</dbReference>
<dbReference type="PANTHER" id="PTHR48268:SF2">
    <property type="entry name" value="PROTEIN KNATM"/>
    <property type="match status" value="1"/>
</dbReference>
<dbReference type="Pfam" id="PF03790">
    <property type="entry name" value="KNOX1"/>
    <property type="match status" value="1"/>
</dbReference>
<dbReference type="SMART" id="SM01255">
    <property type="entry name" value="KNOX1"/>
    <property type="match status" value="1"/>
</dbReference>
<sequence>MDVKKDENSILENMKQEINHSLKEEAQEEEEILKKRISSHPLYGLLLHSHLNCLKVCSGDFDSPEIMNTADDLALSKLSLHPDSSSEATSSELDQFMVLFFFSPCQNIFTQQKTTFHVLLFFPLQINLTFKYSKFILPRKKQ</sequence>
<reference key="1">
    <citation type="journal article" date="2000" name="Nature">
        <title>Sequence and analysis of chromosome 1 of the plant Arabidopsis thaliana.</title>
        <authorList>
            <person name="Theologis A."/>
            <person name="Ecker J.R."/>
            <person name="Palm C.J."/>
            <person name="Federspiel N.A."/>
            <person name="Kaul S."/>
            <person name="White O."/>
            <person name="Alonso J."/>
            <person name="Altafi H."/>
            <person name="Araujo R."/>
            <person name="Bowman C.L."/>
            <person name="Brooks S.Y."/>
            <person name="Buehler E."/>
            <person name="Chan A."/>
            <person name="Chao Q."/>
            <person name="Chen H."/>
            <person name="Cheuk R.F."/>
            <person name="Chin C.W."/>
            <person name="Chung M.K."/>
            <person name="Conn L."/>
            <person name="Conway A.B."/>
            <person name="Conway A.R."/>
            <person name="Creasy T.H."/>
            <person name="Dewar K."/>
            <person name="Dunn P."/>
            <person name="Etgu P."/>
            <person name="Feldblyum T.V."/>
            <person name="Feng J.-D."/>
            <person name="Fong B."/>
            <person name="Fujii C.Y."/>
            <person name="Gill J.E."/>
            <person name="Goldsmith A.D."/>
            <person name="Haas B."/>
            <person name="Hansen N.F."/>
            <person name="Hughes B."/>
            <person name="Huizar L."/>
            <person name="Hunter J.L."/>
            <person name="Jenkins J."/>
            <person name="Johnson-Hopson C."/>
            <person name="Khan S."/>
            <person name="Khaykin E."/>
            <person name="Kim C.J."/>
            <person name="Koo H.L."/>
            <person name="Kremenetskaia I."/>
            <person name="Kurtz D.B."/>
            <person name="Kwan A."/>
            <person name="Lam B."/>
            <person name="Langin-Hooper S."/>
            <person name="Lee A."/>
            <person name="Lee J.M."/>
            <person name="Lenz C.A."/>
            <person name="Li J.H."/>
            <person name="Li Y.-P."/>
            <person name="Lin X."/>
            <person name="Liu S.X."/>
            <person name="Liu Z.A."/>
            <person name="Luros J.S."/>
            <person name="Maiti R."/>
            <person name="Marziali A."/>
            <person name="Militscher J."/>
            <person name="Miranda M."/>
            <person name="Nguyen M."/>
            <person name="Nierman W.C."/>
            <person name="Osborne B.I."/>
            <person name="Pai G."/>
            <person name="Peterson J."/>
            <person name="Pham P.K."/>
            <person name="Rizzo M."/>
            <person name="Rooney T."/>
            <person name="Rowley D."/>
            <person name="Sakano H."/>
            <person name="Salzberg S.L."/>
            <person name="Schwartz J.R."/>
            <person name="Shinn P."/>
            <person name="Southwick A.M."/>
            <person name="Sun H."/>
            <person name="Tallon L.J."/>
            <person name="Tambunga G."/>
            <person name="Toriumi M.J."/>
            <person name="Town C.D."/>
            <person name="Utterback T."/>
            <person name="Van Aken S."/>
            <person name="Vaysberg M."/>
            <person name="Vysotskaia V.S."/>
            <person name="Walker M."/>
            <person name="Wu D."/>
            <person name="Yu G."/>
            <person name="Fraser C.M."/>
            <person name="Venter J.C."/>
            <person name="Davis R.W."/>
        </authorList>
    </citation>
    <scope>NUCLEOTIDE SEQUENCE [LARGE SCALE GENOMIC DNA]</scope>
    <source>
        <strain>cv. Columbia</strain>
    </source>
</reference>
<reference key="2">
    <citation type="journal article" date="2017" name="Plant J.">
        <title>Araport11: a complete reannotation of the Arabidopsis thaliana reference genome.</title>
        <authorList>
            <person name="Cheng C.Y."/>
            <person name="Krishnakumar V."/>
            <person name="Chan A.P."/>
            <person name="Thibaud-Nissen F."/>
            <person name="Schobel S."/>
            <person name="Town C.D."/>
        </authorList>
    </citation>
    <scope>GENOME REANNOTATION</scope>
    <source>
        <strain>cv. Columbia</strain>
    </source>
</reference>
<reference key="3">
    <citation type="journal article" date="2008" name="Plant Cell">
        <title>KNOX lost the OX: the Arabidopsis KNATM gene defines a novel class of KNOX transcriptional regulators missing the homeodomain.</title>
        <authorList>
            <person name="Magnani E."/>
            <person name="Hake S."/>
        </authorList>
    </citation>
    <scope>FUNCTION (ISOFORM KNATM-B)</scope>
    <scope>ALTERNATIVE SPLICING</scope>
    <scope>TISSUE SPECIFICITY</scope>
    <scope>INTERACTION WITH KNAT1; KNAT3; KNAT4; BEL1; BLH2; BLH4 AND BLH9 (ISOFORM KNATM-B)</scope>
    <scope>DOMAIN (ISOFORM KNATM-B)</scope>
    <scope>SUBCELLULAR LOCATION (ISOFORM KNATM-B)</scope>
</reference>
<reference key="4">
    <citation type="journal article" date="2012" name="PLoS Genet.">
        <title>Histone deacetylase HDA6 is functionally associated with AS1 in repression of KNOX genes in arabidopsis.</title>
        <authorList>
            <person name="Luo M."/>
            <person name="Yu C.W."/>
            <person name="Chen F.F."/>
            <person name="Zhao L."/>
            <person name="Tian G."/>
            <person name="Liu X."/>
            <person name="Cui Y."/>
            <person name="Yang J.Y."/>
            <person name="Wu K."/>
        </authorList>
    </citation>
    <scope>INDUCTION BY THE AS1 REPRESSOR COMPLEX</scope>
</reference>
<evidence type="ECO:0000255" key="1"/>
<evidence type="ECO:0000269" key="2">
    <source>
    </source>
</evidence>
<evidence type="ECO:0000269" key="3">
    <source>
    </source>
</evidence>
<evidence type="ECO:0000303" key="4">
    <source>
    </source>
</evidence>
<evidence type="ECO:0000305" key="5"/>
<evidence type="ECO:0000312" key="6">
    <source>
        <dbReference type="Araport" id="AT1G14760"/>
    </source>
</evidence>
<evidence type="ECO:0000312" key="7">
    <source>
        <dbReference type="EMBL" id="AAF79243.1"/>
    </source>
</evidence>
<evidence type="ECO:0000312" key="8">
    <source>
        <dbReference type="Proteomes" id="UP000006548"/>
    </source>
</evidence>
<name>KNATM_ARATH</name>
<protein>
    <recommendedName>
        <fullName evidence="4">Protein KNATM</fullName>
    </recommendedName>
    <alternativeName>
        <fullName evidence="4">KNOX Arabidopsis thaliana MEINOX protein</fullName>
    </alternativeName>
</protein>